<keyword id="KW-0414">Isoprene biosynthesis</keyword>
<keyword id="KW-0464">Manganese</keyword>
<keyword id="KW-0479">Metal-binding</keyword>
<keyword id="KW-0521">NADP</keyword>
<keyword id="KW-0560">Oxidoreductase</keyword>
<reference key="1">
    <citation type="submission" date="2006-03" db="EMBL/GenBank/DDBJ databases">
        <title>Complete sequence of chromosome of Psychrobacter cryohalolentis K5.</title>
        <authorList>
            <consortium name="US DOE Joint Genome Institute"/>
            <person name="Copeland A."/>
            <person name="Lucas S."/>
            <person name="Lapidus A."/>
            <person name="Barry K."/>
            <person name="Detter J.C."/>
            <person name="Glavina T."/>
            <person name="Hammon N."/>
            <person name="Israni S."/>
            <person name="Dalin E."/>
            <person name="Tice H."/>
            <person name="Pitluck S."/>
            <person name="Brettin T."/>
            <person name="Bruce D."/>
            <person name="Han C."/>
            <person name="Tapia R."/>
            <person name="Sims D.R."/>
            <person name="Gilna P."/>
            <person name="Schmutz J."/>
            <person name="Larimer F."/>
            <person name="Land M."/>
            <person name="Hauser L."/>
            <person name="Kyrpides N."/>
            <person name="Kim E."/>
            <person name="Richardson P."/>
        </authorList>
    </citation>
    <scope>NUCLEOTIDE SEQUENCE [LARGE SCALE GENOMIC DNA]</scope>
    <source>
        <strain>ATCC BAA-1226 / DSM 17306 / VKM B-2378 / K5</strain>
    </source>
</reference>
<gene>
    <name evidence="1" type="primary">dxr</name>
    <name type="ordered locus">Pcryo_1710</name>
</gene>
<sequence length="402" mass="43358">MVMTQRIAVLGATGSIGDSTLAILAAQPQHYDVYALSGYHRLDKLLALCQQFAPKRVGVPTAAVDEFAKRLSEAGLDIEVVGGETGLVDIATDSQTDTVVAAIVGAAGLPSTLAAARAGKRILLANKEALVMAGQVMINAVKTHHATLLPLDSEHNAIFQCLPFAIQQDNTQIHRLNHGVRKLWLTASGGPFLQQSFTQMQQASVAEAVKHPNWSMGQKISVDSATMMNKGLELIEACHLFDLPENKINVVIHPQSIIHSMVEYSDGSFLAQLGSPDMKTPIAHALSYPDRIDSGSQPLDLFALSGLEFIEPDLQKFACLRLAREAMQTGTHATIILNAANEIAVSAFLNNQIRLTDIADINEQALNEIQVSALTETADIDEILAIDNLARQHTEKLVARLV</sequence>
<comment type="function">
    <text evidence="1">Catalyzes the NADPH-dependent rearrangement and reduction of 1-deoxy-D-xylulose-5-phosphate (DXP) to 2-C-methyl-D-erythritol 4-phosphate (MEP).</text>
</comment>
<comment type="catalytic activity">
    <reaction evidence="1">
        <text>2-C-methyl-D-erythritol 4-phosphate + NADP(+) = 1-deoxy-D-xylulose 5-phosphate + NADPH + H(+)</text>
        <dbReference type="Rhea" id="RHEA:13717"/>
        <dbReference type="ChEBI" id="CHEBI:15378"/>
        <dbReference type="ChEBI" id="CHEBI:57783"/>
        <dbReference type="ChEBI" id="CHEBI:57792"/>
        <dbReference type="ChEBI" id="CHEBI:58262"/>
        <dbReference type="ChEBI" id="CHEBI:58349"/>
        <dbReference type="EC" id="1.1.1.267"/>
    </reaction>
    <physiologicalReaction direction="right-to-left" evidence="1">
        <dbReference type="Rhea" id="RHEA:13719"/>
    </physiologicalReaction>
</comment>
<comment type="cofactor">
    <cofactor evidence="1">
        <name>Mg(2+)</name>
        <dbReference type="ChEBI" id="CHEBI:18420"/>
    </cofactor>
    <cofactor evidence="1">
        <name>Mn(2+)</name>
        <dbReference type="ChEBI" id="CHEBI:29035"/>
    </cofactor>
</comment>
<comment type="pathway">
    <text evidence="1">Isoprenoid biosynthesis; isopentenyl diphosphate biosynthesis via DXP pathway; isopentenyl diphosphate from 1-deoxy-D-xylulose 5-phosphate: step 1/6.</text>
</comment>
<comment type="similarity">
    <text evidence="1">Belongs to the DXR family.</text>
</comment>
<accession>Q1QA16</accession>
<protein>
    <recommendedName>
        <fullName evidence="1">1-deoxy-D-xylulose 5-phosphate reductoisomerase</fullName>
        <shortName evidence="1">DXP reductoisomerase</shortName>
        <ecNumber evidence="1">1.1.1.267</ecNumber>
    </recommendedName>
    <alternativeName>
        <fullName evidence="1">1-deoxyxylulose-5-phosphate reductoisomerase</fullName>
    </alternativeName>
    <alternativeName>
        <fullName evidence="1">2-C-methyl-D-erythritol 4-phosphate synthase</fullName>
    </alternativeName>
</protein>
<proteinExistence type="inferred from homology"/>
<evidence type="ECO:0000255" key="1">
    <source>
        <dbReference type="HAMAP-Rule" id="MF_00183"/>
    </source>
</evidence>
<feature type="chain" id="PRO_1000020295" description="1-deoxy-D-xylulose 5-phosphate reductoisomerase">
    <location>
        <begin position="1"/>
        <end position="402"/>
    </location>
</feature>
<feature type="binding site" evidence="1">
    <location>
        <position position="13"/>
    </location>
    <ligand>
        <name>NADPH</name>
        <dbReference type="ChEBI" id="CHEBI:57783"/>
    </ligand>
</feature>
<feature type="binding site" evidence="1">
    <location>
        <position position="14"/>
    </location>
    <ligand>
        <name>NADPH</name>
        <dbReference type="ChEBI" id="CHEBI:57783"/>
    </ligand>
</feature>
<feature type="binding site" evidence="1">
    <location>
        <position position="15"/>
    </location>
    <ligand>
        <name>NADPH</name>
        <dbReference type="ChEBI" id="CHEBI:57783"/>
    </ligand>
</feature>
<feature type="binding site" evidence="1">
    <location>
        <position position="16"/>
    </location>
    <ligand>
        <name>NADPH</name>
        <dbReference type="ChEBI" id="CHEBI:57783"/>
    </ligand>
</feature>
<feature type="binding site" evidence="1">
    <location>
        <position position="126"/>
    </location>
    <ligand>
        <name>NADPH</name>
        <dbReference type="ChEBI" id="CHEBI:57783"/>
    </ligand>
</feature>
<feature type="binding site" evidence="1">
    <location>
        <position position="127"/>
    </location>
    <ligand>
        <name>1-deoxy-D-xylulose 5-phosphate</name>
        <dbReference type="ChEBI" id="CHEBI:57792"/>
    </ligand>
</feature>
<feature type="binding site" evidence="1">
    <location>
        <position position="128"/>
    </location>
    <ligand>
        <name>NADPH</name>
        <dbReference type="ChEBI" id="CHEBI:57783"/>
    </ligand>
</feature>
<feature type="binding site" evidence="1">
    <location>
        <position position="152"/>
    </location>
    <ligand>
        <name>Mn(2+)</name>
        <dbReference type="ChEBI" id="CHEBI:29035"/>
    </ligand>
</feature>
<feature type="binding site" evidence="1">
    <location>
        <position position="153"/>
    </location>
    <ligand>
        <name>1-deoxy-D-xylulose 5-phosphate</name>
        <dbReference type="ChEBI" id="CHEBI:57792"/>
    </ligand>
</feature>
<feature type="binding site" evidence="1">
    <location>
        <position position="154"/>
    </location>
    <ligand>
        <name>1-deoxy-D-xylulose 5-phosphate</name>
        <dbReference type="ChEBI" id="CHEBI:57792"/>
    </ligand>
</feature>
<feature type="binding site" evidence="1">
    <location>
        <position position="154"/>
    </location>
    <ligand>
        <name>Mn(2+)</name>
        <dbReference type="ChEBI" id="CHEBI:29035"/>
    </ligand>
</feature>
<feature type="binding site" evidence="1">
    <location>
        <position position="188"/>
    </location>
    <ligand>
        <name>1-deoxy-D-xylulose 5-phosphate</name>
        <dbReference type="ChEBI" id="CHEBI:57792"/>
    </ligand>
</feature>
<feature type="binding site" evidence="1">
    <location>
        <position position="211"/>
    </location>
    <ligand>
        <name>1-deoxy-D-xylulose 5-phosphate</name>
        <dbReference type="ChEBI" id="CHEBI:57792"/>
    </ligand>
</feature>
<feature type="binding site" evidence="1">
    <location>
        <position position="217"/>
    </location>
    <ligand>
        <name>NADPH</name>
        <dbReference type="ChEBI" id="CHEBI:57783"/>
    </ligand>
</feature>
<feature type="binding site" evidence="1">
    <location>
        <position position="224"/>
    </location>
    <ligand>
        <name>1-deoxy-D-xylulose 5-phosphate</name>
        <dbReference type="ChEBI" id="CHEBI:57792"/>
    </ligand>
</feature>
<feature type="binding site" evidence="1">
    <location>
        <position position="229"/>
    </location>
    <ligand>
        <name>1-deoxy-D-xylulose 5-phosphate</name>
        <dbReference type="ChEBI" id="CHEBI:57792"/>
    </ligand>
</feature>
<feature type="binding site" evidence="1">
    <location>
        <position position="230"/>
    </location>
    <ligand>
        <name>1-deoxy-D-xylulose 5-phosphate</name>
        <dbReference type="ChEBI" id="CHEBI:57792"/>
    </ligand>
</feature>
<feature type="binding site" evidence="1">
    <location>
        <position position="233"/>
    </location>
    <ligand>
        <name>1-deoxy-D-xylulose 5-phosphate</name>
        <dbReference type="ChEBI" id="CHEBI:57792"/>
    </ligand>
</feature>
<feature type="binding site" evidence="1">
    <location>
        <position position="233"/>
    </location>
    <ligand>
        <name>Mn(2+)</name>
        <dbReference type="ChEBI" id="CHEBI:29035"/>
    </ligand>
</feature>
<name>DXR_PSYCK</name>
<organism>
    <name type="scientific">Psychrobacter cryohalolentis (strain ATCC BAA-1226 / DSM 17306 / VKM B-2378 / K5)</name>
    <dbReference type="NCBI Taxonomy" id="335284"/>
    <lineage>
        <taxon>Bacteria</taxon>
        <taxon>Pseudomonadati</taxon>
        <taxon>Pseudomonadota</taxon>
        <taxon>Gammaproteobacteria</taxon>
        <taxon>Moraxellales</taxon>
        <taxon>Moraxellaceae</taxon>
        <taxon>Psychrobacter</taxon>
    </lineage>
</organism>
<dbReference type="EC" id="1.1.1.267" evidence="1"/>
<dbReference type="EMBL" id="CP000323">
    <property type="protein sequence ID" value="ABE75487.1"/>
    <property type="molecule type" value="Genomic_DNA"/>
</dbReference>
<dbReference type="RefSeq" id="WP_011514035.1">
    <property type="nucleotide sequence ID" value="NC_007969.1"/>
</dbReference>
<dbReference type="SMR" id="Q1QA16"/>
<dbReference type="STRING" id="335284.Pcryo_1710"/>
<dbReference type="KEGG" id="pcr:Pcryo_1710"/>
<dbReference type="eggNOG" id="COG0743">
    <property type="taxonomic scope" value="Bacteria"/>
</dbReference>
<dbReference type="HOGENOM" id="CLU_035714_4_0_6"/>
<dbReference type="UniPathway" id="UPA00056">
    <property type="reaction ID" value="UER00092"/>
</dbReference>
<dbReference type="Proteomes" id="UP000002425">
    <property type="component" value="Chromosome"/>
</dbReference>
<dbReference type="GO" id="GO:0030604">
    <property type="term" value="F:1-deoxy-D-xylulose-5-phosphate reductoisomerase activity"/>
    <property type="evidence" value="ECO:0007669"/>
    <property type="project" value="UniProtKB-UniRule"/>
</dbReference>
<dbReference type="GO" id="GO:0030145">
    <property type="term" value="F:manganese ion binding"/>
    <property type="evidence" value="ECO:0007669"/>
    <property type="project" value="TreeGrafter"/>
</dbReference>
<dbReference type="GO" id="GO:0070402">
    <property type="term" value="F:NADPH binding"/>
    <property type="evidence" value="ECO:0007669"/>
    <property type="project" value="InterPro"/>
</dbReference>
<dbReference type="GO" id="GO:0051484">
    <property type="term" value="P:isopentenyl diphosphate biosynthetic process, methylerythritol 4-phosphate pathway involved in terpenoid biosynthetic process"/>
    <property type="evidence" value="ECO:0007669"/>
    <property type="project" value="TreeGrafter"/>
</dbReference>
<dbReference type="FunFam" id="3.40.50.720:FF:000045">
    <property type="entry name" value="1-deoxy-D-xylulose 5-phosphate reductoisomerase"/>
    <property type="match status" value="1"/>
</dbReference>
<dbReference type="Gene3D" id="1.10.1740.10">
    <property type="match status" value="1"/>
</dbReference>
<dbReference type="Gene3D" id="3.40.50.720">
    <property type="entry name" value="NAD(P)-binding Rossmann-like Domain"/>
    <property type="match status" value="1"/>
</dbReference>
<dbReference type="HAMAP" id="MF_00183">
    <property type="entry name" value="DXP_reductoisom"/>
    <property type="match status" value="1"/>
</dbReference>
<dbReference type="InterPro" id="IPR003821">
    <property type="entry name" value="DXP_reductoisomerase"/>
</dbReference>
<dbReference type="InterPro" id="IPR013644">
    <property type="entry name" value="DXP_reductoisomerase_C"/>
</dbReference>
<dbReference type="InterPro" id="IPR013512">
    <property type="entry name" value="DXP_reductoisomerase_N"/>
</dbReference>
<dbReference type="InterPro" id="IPR026877">
    <property type="entry name" value="DXPR_C"/>
</dbReference>
<dbReference type="InterPro" id="IPR036169">
    <property type="entry name" value="DXPR_C_sf"/>
</dbReference>
<dbReference type="InterPro" id="IPR036291">
    <property type="entry name" value="NAD(P)-bd_dom_sf"/>
</dbReference>
<dbReference type="NCBIfam" id="TIGR00243">
    <property type="entry name" value="Dxr"/>
    <property type="match status" value="1"/>
</dbReference>
<dbReference type="NCBIfam" id="NF003938">
    <property type="entry name" value="PRK05447.1-1"/>
    <property type="match status" value="1"/>
</dbReference>
<dbReference type="NCBIfam" id="NF009114">
    <property type="entry name" value="PRK12464.1"/>
    <property type="match status" value="1"/>
</dbReference>
<dbReference type="PANTHER" id="PTHR30525">
    <property type="entry name" value="1-DEOXY-D-XYLULOSE 5-PHOSPHATE REDUCTOISOMERASE"/>
    <property type="match status" value="1"/>
</dbReference>
<dbReference type="PANTHER" id="PTHR30525:SF0">
    <property type="entry name" value="1-DEOXY-D-XYLULOSE 5-PHOSPHATE REDUCTOISOMERASE, CHLOROPLASTIC"/>
    <property type="match status" value="1"/>
</dbReference>
<dbReference type="Pfam" id="PF08436">
    <property type="entry name" value="DXP_redisom_C"/>
    <property type="match status" value="1"/>
</dbReference>
<dbReference type="Pfam" id="PF02670">
    <property type="entry name" value="DXP_reductoisom"/>
    <property type="match status" value="1"/>
</dbReference>
<dbReference type="Pfam" id="PF13288">
    <property type="entry name" value="DXPR_C"/>
    <property type="match status" value="1"/>
</dbReference>
<dbReference type="PIRSF" id="PIRSF006205">
    <property type="entry name" value="Dxp_reductismrs"/>
    <property type="match status" value="1"/>
</dbReference>
<dbReference type="SUPFAM" id="SSF69055">
    <property type="entry name" value="1-deoxy-D-xylulose-5-phosphate reductoisomerase, C-terminal domain"/>
    <property type="match status" value="1"/>
</dbReference>
<dbReference type="SUPFAM" id="SSF55347">
    <property type="entry name" value="Glyceraldehyde-3-phosphate dehydrogenase-like, C-terminal domain"/>
    <property type="match status" value="1"/>
</dbReference>
<dbReference type="SUPFAM" id="SSF51735">
    <property type="entry name" value="NAD(P)-binding Rossmann-fold domains"/>
    <property type="match status" value="1"/>
</dbReference>